<gene>
    <name type="ORF">Y48A6B.3</name>
</gene>
<protein>
    <recommendedName>
        <fullName>Putative H/ACA ribonucleoprotein complex subunit 2-like protein</fullName>
    </recommendedName>
</protein>
<proteinExistence type="inferred from homology"/>
<evidence type="ECO:0000250" key="1"/>
<evidence type="ECO:0000256" key="2">
    <source>
        <dbReference type="SAM" id="MobiDB-lite"/>
    </source>
</evidence>
<evidence type="ECO:0000305" key="3"/>
<keyword id="KW-0539">Nucleus</keyword>
<keyword id="KW-1185">Reference proteome</keyword>
<keyword id="KW-0687">Ribonucleoprotein</keyword>
<keyword id="KW-0690">Ribosome biogenesis</keyword>
<keyword id="KW-0694">RNA-binding</keyword>
<keyword id="KW-0698">rRNA processing</keyword>
<comment type="function">
    <text evidence="1">Required for ribosome biogenesis. Part of a complex which catalyzes pseudouridylation of rRNA. This involves the isomerization of uridine such that the ribose is subsequently attached to C5, instead of the normal N1. Pseudouridine ('psi') residues may serve to stabilize the conformation of rRNAs (By similarity).</text>
</comment>
<comment type="subunit">
    <text>Component of the small nucleolar ribonucleoprotein particle containing H/ACA-type snoRNAs (H/ACA snoRNPs).</text>
</comment>
<comment type="subcellular location">
    <subcellularLocation>
        <location evidence="1">Nucleus</location>
        <location evidence="1">Nucleolus</location>
    </subcellularLocation>
</comment>
<comment type="similarity">
    <text evidence="3">Belongs to the eukaryotic ribosomal protein eL8 family.</text>
</comment>
<dbReference type="EMBL" id="AL023844">
    <property type="protein sequence ID" value="CAA19527.1"/>
    <property type="molecule type" value="Genomic_DNA"/>
</dbReference>
<dbReference type="PIR" id="T26980">
    <property type="entry name" value="T26980"/>
</dbReference>
<dbReference type="RefSeq" id="NP_499415.1">
    <property type="nucleotide sequence ID" value="NM_067014.8"/>
</dbReference>
<dbReference type="SMR" id="Q9XXD4"/>
<dbReference type="BioGRID" id="41717">
    <property type="interactions" value="35"/>
</dbReference>
<dbReference type="FunCoup" id="Q9XXD4">
    <property type="interactions" value="2090"/>
</dbReference>
<dbReference type="STRING" id="6239.Y48A6B.3.1"/>
<dbReference type="PaxDb" id="6239-Y48A6B.3"/>
<dbReference type="PeptideAtlas" id="Q9XXD4"/>
<dbReference type="EnsemblMetazoa" id="Y48A6B.3.1">
    <property type="protein sequence ID" value="Y48A6B.3.1"/>
    <property type="gene ID" value="WBGene00012964"/>
</dbReference>
<dbReference type="GeneID" id="176531"/>
<dbReference type="KEGG" id="cel:CELE_Y48A6B.3"/>
<dbReference type="UCSC" id="Y48A6B.3.1">
    <property type="organism name" value="c. elegans"/>
</dbReference>
<dbReference type="AGR" id="WB:WBGene00012964"/>
<dbReference type="CTD" id="176531"/>
<dbReference type="WormBase" id="Y48A6B.3">
    <property type="protein sequence ID" value="CE19186"/>
    <property type="gene ID" value="WBGene00012964"/>
</dbReference>
<dbReference type="eggNOG" id="KOG3167">
    <property type="taxonomic scope" value="Eukaryota"/>
</dbReference>
<dbReference type="GeneTree" id="ENSGT00550000074939"/>
<dbReference type="HOGENOM" id="CLU_084513_1_1_1"/>
<dbReference type="InParanoid" id="Q9XXD4"/>
<dbReference type="OMA" id="EDNYEAR"/>
<dbReference type="OrthoDB" id="5364946at2759"/>
<dbReference type="PhylomeDB" id="Q9XXD4"/>
<dbReference type="PRO" id="PR:Q9XXD4"/>
<dbReference type="Proteomes" id="UP000001940">
    <property type="component" value="Chromosome III"/>
</dbReference>
<dbReference type="Bgee" id="WBGene00012964">
    <property type="expression patterns" value="Expressed in germ line (C elegans) and 4 other cell types or tissues"/>
</dbReference>
<dbReference type="GO" id="GO:0031429">
    <property type="term" value="C:box H/ACA snoRNP complex"/>
    <property type="evidence" value="ECO:0000318"/>
    <property type="project" value="GO_Central"/>
</dbReference>
<dbReference type="GO" id="GO:0005732">
    <property type="term" value="C:sno(s)RNA-containing ribonucleoprotein complex"/>
    <property type="evidence" value="ECO:0000250"/>
    <property type="project" value="UniProtKB"/>
</dbReference>
<dbReference type="GO" id="GO:0034513">
    <property type="term" value="F:box H/ACA snoRNA binding"/>
    <property type="evidence" value="ECO:0000318"/>
    <property type="project" value="GO_Central"/>
</dbReference>
<dbReference type="GO" id="GO:0031118">
    <property type="term" value="P:rRNA pseudouridine synthesis"/>
    <property type="evidence" value="ECO:0000250"/>
    <property type="project" value="UniProtKB"/>
</dbReference>
<dbReference type="GO" id="GO:0031120">
    <property type="term" value="P:snRNA pseudouridine synthesis"/>
    <property type="evidence" value="ECO:0000318"/>
    <property type="project" value="GO_Central"/>
</dbReference>
<dbReference type="Gene3D" id="3.30.1330.30">
    <property type="match status" value="1"/>
</dbReference>
<dbReference type="InterPro" id="IPR050257">
    <property type="entry name" value="eL8/uL1-like"/>
</dbReference>
<dbReference type="InterPro" id="IPR002415">
    <property type="entry name" value="H/ACA_rnp_Nhp2-like"/>
</dbReference>
<dbReference type="InterPro" id="IPR029064">
    <property type="entry name" value="Ribosomal_eL30-like_sf"/>
</dbReference>
<dbReference type="InterPro" id="IPR004037">
    <property type="entry name" value="Ribosomal_eL8-like_CS"/>
</dbReference>
<dbReference type="InterPro" id="IPR004038">
    <property type="entry name" value="Ribosomal_eL8/eL30/eS12/Gad45"/>
</dbReference>
<dbReference type="InterPro" id="IPR018492">
    <property type="entry name" value="Ribosomal_eL8/Nhp2"/>
</dbReference>
<dbReference type="PANTHER" id="PTHR23105">
    <property type="entry name" value="RIBOSOMAL PROTEIN L7AE FAMILY MEMBER"/>
    <property type="match status" value="1"/>
</dbReference>
<dbReference type="Pfam" id="PF01248">
    <property type="entry name" value="Ribosomal_L7Ae"/>
    <property type="match status" value="1"/>
</dbReference>
<dbReference type="PRINTS" id="PR00881">
    <property type="entry name" value="L7ARS6FAMILY"/>
</dbReference>
<dbReference type="PRINTS" id="PR00883">
    <property type="entry name" value="NUCLEARHMG"/>
</dbReference>
<dbReference type="SUPFAM" id="SSF55315">
    <property type="entry name" value="L30e-like"/>
    <property type="match status" value="1"/>
</dbReference>
<dbReference type="PROSITE" id="PS01082">
    <property type="entry name" value="RIBOSOMAL_L7AE"/>
    <property type="match status" value="1"/>
</dbReference>
<reference key="1">
    <citation type="journal article" date="1998" name="Science">
        <title>Genome sequence of the nematode C. elegans: a platform for investigating biology.</title>
        <authorList>
            <consortium name="The C. elegans sequencing consortium"/>
        </authorList>
    </citation>
    <scope>NUCLEOTIDE SEQUENCE [LARGE SCALE GENOMIC DNA]</scope>
    <source>
        <strain>Bristol N2</strain>
    </source>
</reference>
<accession>Q9XXD4</accession>
<sequence length="163" mass="18091">MGKRNLDETMNESTVSEANGDATAPTTEKDEYQALCELVNPIAQPLANRKLAKKVYKLIKKASAGDKTLREGIKDVQKELRRNEKGICILAGNVSPIDVYSHIPGICEEKEIPYVYIPSREQLGLAVGHRRPSILIFVKPSGDFKELYDEVAEALRHLTVEAA</sequence>
<feature type="chain" id="PRO_0000136771" description="Putative H/ACA ribonucleoprotein complex subunit 2-like protein">
    <location>
        <begin position="1"/>
        <end position="163"/>
    </location>
</feature>
<feature type="region of interest" description="Disordered" evidence="2">
    <location>
        <begin position="1"/>
        <end position="27"/>
    </location>
</feature>
<organism>
    <name type="scientific">Caenorhabditis elegans</name>
    <dbReference type="NCBI Taxonomy" id="6239"/>
    <lineage>
        <taxon>Eukaryota</taxon>
        <taxon>Metazoa</taxon>
        <taxon>Ecdysozoa</taxon>
        <taxon>Nematoda</taxon>
        <taxon>Chromadorea</taxon>
        <taxon>Rhabditida</taxon>
        <taxon>Rhabditina</taxon>
        <taxon>Rhabditomorpha</taxon>
        <taxon>Rhabditoidea</taxon>
        <taxon>Rhabditidae</taxon>
        <taxon>Peloderinae</taxon>
        <taxon>Caenorhabditis</taxon>
    </lineage>
</organism>
<name>NHP2_CAEEL</name>